<evidence type="ECO:0000250" key="1"/>
<evidence type="ECO:0000250" key="2">
    <source>
        <dbReference type="UniProtKB" id="P9WMY7"/>
    </source>
</evidence>
<evidence type="ECO:0000255" key="3">
    <source>
        <dbReference type="HAMAP-Rule" id="MF_01695"/>
    </source>
</evidence>
<evidence type="ECO:0000256" key="4">
    <source>
        <dbReference type="SAM" id="MobiDB-lite"/>
    </source>
</evidence>
<evidence type="ECO:0000305" key="5"/>
<comment type="function">
    <text evidence="2 3">Catalyzes the transfer of a N-acetyl-glucosamine moiety to 1D-myo-inositol 3-phosphate to produce 1D-myo-inositol 2-acetamido-2-deoxy-glucopyranoside 3-phosphate in the mycothiol (MSH) biosynthesis pathway (By similarity). MSH and WhiB3 are probably part of a regulatory circuit that mediates gene expression upon acid stress (like that found in host macrophage phagosomes). MSH is one of the major redox buffers which protects bacteria against redox stressors and antibiotics; loss of MSH or ergothioneine (ERG, the other major redox buffer in this bacteria) leads to respiratory alterations and bioenergetic deficiencies that negatively impact virulence (By similarity).</text>
</comment>
<comment type="catalytic activity">
    <reaction>
        <text>1D-myo-inositol 3-phosphate + UDP-N-acetyl-alpha-D-glucosamine = 1D-myo-inositol 2-acetamido-2-deoxy-alpha-D-glucopyranoside 3-phosphate + UDP + H(+)</text>
        <dbReference type="Rhea" id="RHEA:26188"/>
        <dbReference type="ChEBI" id="CHEBI:15378"/>
        <dbReference type="ChEBI" id="CHEBI:57705"/>
        <dbReference type="ChEBI" id="CHEBI:58223"/>
        <dbReference type="ChEBI" id="CHEBI:58401"/>
        <dbReference type="ChEBI" id="CHEBI:58892"/>
        <dbReference type="EC" id="2.4.1.250"/>
    </reaction>
</comment>
<comment type="similarity">
    <text evidence="5">Belongs to the glycosyltransferase group 1 family. MshA subfamily.</text>
</comment>
<name>MSHA_MYCTO</name>
<feature type="chain" id="PRO_0000427220" description="D-inositol 3-phosphate glycosyltransferase">
    <location>
        <begin position="1"/>
        <end position="480"/>
    </location>
</feature>
<feature type="region of interest" description="Disordered" evidence="4">
    <location>
        <begin position="1"/>
        <end position="42"/>
    </location>
</feature>
<feature type="binding site" evidence="1">
    <location>
        <position position="53"/>
    </location>
    <ligand>
        <name>1D-myo-inositol 3-phosphate</name>
        <dbReference type="ChEBI" id="CHEBI:58401"/>
    </ligand>
</feature>
<feature type="binding site" evidence="1">
    <location>
        <begin position="59"/>
        <end position="60"/>
    </location>
    <ligand>
        <name>UDP-N-acetyl-alpha-D-glucosamine</name>
        <dbReference type="ChEBI" id="CHEBI:57705"/>
    </ligand>
</feature>
<feature type="binding site" evidence="1">
    <location>
        <begin position="64"/>
        <end position="69"/>
    </location>
    <ligand>
        <name>1D-myo-inositol 3-phosphate</name>
        <dbReference type="ChEBI" id="CHEBI:58401"/>
    </ligand>
</feature>
<feature type="binding site" evidence="1">
    <location>
        <position position="67"/>
    </location>
    <ligand>
        <name>UDP-N-acetyl-alpha-D-glucosamine</name>
        <dbReference type="ChEBI" id="CHEBI:57705"/>
    </ligand>
</feature>
<feature type="binding site" evidence="1">
    <location>
        <position position="122"/>
    </location>
    <ligand>
        <name>1D-myo-inositol 3-phosphate</name>
        <dbReference type="ChEBI" id="CHEBI:58401"/>
    </ligand>
</feature>
<feature type="binding site" evidence="1">
    <location>
        <position position="155"/>
    </location>
    <ligand>
        <name>1D-myo-inositol 3-phosphate</name>
        <dbReference type="ChEBI" id="CHEBI:58401"/>
    </ligand>
</feature>
<feature type="binding site" evidence="1">
    <location>
        <position position="179"/>
    </location>
    <ligand>
        <name>1D-myo-inositol 3-phosphate</name>
        <dbReference type="ChEBI" id="CHEBI:58401"/>
    </ligand>
</feature>
<feature type="binding site" evidence="1">
    <location>
        <position position="199"/>
    </location>
    <ligand>
        <name>1D-myo-inositol 3-phosphate</name>
        <dbReference type="ChEBI" id="CHEBI:58401"/>
    </ligand>
</feature>
<feature type="binding site" evidence="1">
    <location>
        <position position="273"/>
    </location>
    <ligand>
        <name>UDP-N-acetyl-alpha-D-glucosamine</name>
        <dbReference type="ChEBI" id="CHEBI:57705"/>
    </ligand>
</feature>
<feature type="binding site" evidence="1">
    <location>
        <position position="278"/>
    </location>
    <ligand>
        <name>UDP-N-acetyl-alpha-D-glucosamine</name>
        <dbReference type="ChEBI" id="CHEBI:57705"/>
    </ligand>
</feature>
<feature type="binding site" evidence="1">
    <location>
        <position position="331"/>
    </location>
    <ligand>
        <name>UDP-N-acetyl-alpha-D-glucosamine</name>
        <dbReference type="ChEBI" id="CHEBI:57705"/>
    </ligand>
</feature>
<feature type="binding site" evidence="1">
    <location>
        <position position="340"/>
    </location>
    <ligand>
        <name>Mg(2+)</name>
        <dbReference type="ChEBI" id="CHEBI:18420"/>
    </ligand>
</feature>
<feature type="binding site" evidence="1">
    <location>
        <position position="341"/>
    </location>
    <ligand>
        <name>Mg(2+)</name>
        <dbReference type="ChEBI" id="CHEBI:18420"/>
    </ligand>
</feature>
<feature type="binding site" evidence="1">
    <location>
        <position position="343"/>
    </location>
    <ligand>
        <name>Mg(2+)</name>
        <dbReference type="ChEBI" id="CHEBI:18420"/>
    </ligand>
</feature>
<feature type="binding site" evidence="1">
    <location>
        <position position="353"/>
    </location>
    <ligand>
        <name>UDP-N-acetyl-alpha-D-glucosamine</name>
        <dbReference type="ChEBI" id="CHEBI:57705"/>
    </ligand>
</feature>
<feature type="binding site" evidence="1">
    <location>
        <position position="361"/>
    </location>
    <ligand>
        <name>UDP-N-acetyl-alpha-D-glucosamine</name>
        <dbReference type="ChEBI" id="CHEBI:57705"/>
    </ligand>
</feature>
<feature type="binding site" evidence="1">
    <location>
        <position position="367"/>
    </location>
    <ligand>
        <name>Mg(2+)</name>
        <dbReference type="ChEBI" id="CHEBI:18420"/>
    </ligand>
</feature>
<dbReference type="EC" id="2.4.1.250"/>
<dbReference type="EMBL" id="AE000516">
    <property type="protein sequence ID" value="AAK44727.1"/>
    <property type="molecule type" value="Genomic_DNA"/>
</dbReference>
<dbReference type="PIR" id="A70744">
    <property type="entry name" value="A70744"/>
</dbReference>
<dbReference type="RefSeq" id="WP_003402367.1">
    <property type="nucleotide sequence ID" value="NZ_KK341227.1"/>
</dbReference>
<dbReference type="SMR" id="P9WMY6"/>
<dbReference type="CAZy" id="GT4">
    <property type="family name" value="Glycosyltransferase Family 4"/>
</dbReference>
<dbReference type="KEGG" id="mtc:MT0504"/>
<dbReference type="PATRIC" id="fig|83331.31.peg.534"/>
<dbReference type="HOGENOM" id="CLU_009583_2_3_11"/>
<dbReference type="Proteomes" id="UP000001020">
    <property type="component" value="Chromosome"/>
</dbReference>
<dbReference type="GO" id="GO:0008375">
    <property type="term" value="F:acetylglucosaminyltransferase activity"/>
    <property type="evidence" value="ECO:0007669"/>
    <property type="project" value="UniProtKB-UniRule"/>
</dbReference>
<dbReference type="GO" id="GO:0102710">
    <property type="term" value="F:D-inositol-3-phosphate glycosyltransferase activity"/>
    <property type="evidence" value="ECO:0007669"/>
    <property type="project" value="UniProtKB-EC"/>
</dbReference>
<dbReference type="GO" id="GO:0000287">
    <property type="term" value="F:magnesium ion binding"/>
    <property type="evidence" value="ECO:0007669"/>
    <property type="project" value="UniProtKB-UniRule"/>
</dbReference>
<dbReference type="GO" id="GO:0010125">
    <property type="term" value="P:mycothiol biosynthetic process"/>
    <property type="evidence" value="ECO:0007669"/>
    <property type="project" value="UniProtKB-UniRule"/>
</dbReference>
<dbReference type="CDD" id="cd03800">
    <property type="entry name" value="GT4_sucrose_synthase"/>
    <property type="match status" value="1"/>
</dbReference>
<dbReference type="FunFam" id="3.40.50.2000:FF:000265">
    <property type="entry name" value="D-inositol 3-phosphate glycosyltransferase"/>
    <property type="match status" value="1"/>
</dbReference>
<dbReference type="FunFam" id="3.40.50.2000:FF:000123">
    <property type="entry name" value="D-inositol-3-phosphate glycosyltransferase"/>
    <property type="match status" value="1"/>
</dbReference>
<dbReference type="Gene3D" id="3.40.50.2000">
    <property type="entry name" value="Glycogen Phosphorylase B"/>
    <property type="match status" value="2"/>
</dbReference>
<dbReference type="HAMAP" id="MF_01695">
    <property type="entry name" value="MshA"/>
    <property type="match status" value="1"/>
</dbReference>
<dbReference type="InterPro" id="IPR001296">
    <property type="entry name" value="Glyco_trans_1"/>
</dbReference>
<dbReference type="InterPro" id="IPR028098">
    <property type="entry name" value="Glyco_trans_4-like_N"/>
</dbReference>
<dbReference type="InterPro" id="IPR017814">
    <property type="entry name" value="Mycothiol_biosynthesis_MshA"/>
</dbReference>
<dbReference type="NCBIfam" id="TIGR03449">
    <property type="entry name" value="mycothiol_MshA"/>
    <property type="match status" value="1"/>
</dbReference>
<dbReference type="PANTHER" id="PTHR12526:SF510">
    <property type="entry name" value="D-INOSITOL 3-PHOSPHATE GLYCOSYLTRANSFERASE"/>
    <property type="match status" value="1"/>
</dbReference>
<dbReference type="PANTHER" id="PTHR12526">
    <property type="entry name" value="GLYCOSYLTRANSFERASE"/>
    <property type="match status" value="1"/>
</dbReference>
<dbReference type="Pfam" id="PF13579">
    <property type="entry name" value="Glyco_trans_4_4"/>
    <property type="match status" value="1"/>
</dbReference>
<dbReference type="Pfam" id="PF00534">
    <property type="entry name" value="Glycos_transf_1"/>
    <property type="match status" value="1"/>
</dbReference>
<dbReference type="SUPFAM" id="SSF53756">
    <property type="entry name" value="UDP-Glycosyltransferase/glycogen phosphorylase"/>
    <property type="match status" value="1"/>
</dbReference>
<reference key="1">
    <citation type="journal article" date="2002" name="J. Bacteriol.">
        <title>Whole-genome comparison of Mycobacterium tuberculosis clinical and laboratory strains.</title>
        <authorList>
            <person name="Fleischmann R.D."/>
            <person name="Alland D."/>
            <person name="Eisen J.A."/>
            <person name="Carpenter L."/>
            <person name="White O."/>
            <person name="Peterson J.D."/>
            <person name="DeBoy R.T."/>
            <person name="Dodson R.J."/>
            <person name="Gwinn M.L."/>
            <person name="Haft D.H."/>
            <person name="Hickey E.K."/>
            <person name="Kolonay J.F."/>
            <person name="Nelson W.C."/>
            <person name="Umayam L.A."/>
            <person name="Ermolaeva M.D."/>
            <person name="Salzberg S.L."/>
            <person name="Delcher A."/>
            <person name="Utterback T.R."/>
            <person name="Weidman J.F."/>
            <person name="Khouri H.M."/>
            <person name="Gill J."/>
            <person name="Mikula A."/>
            <person name="Bishai W."/>
            <person name="Jacobs W.R. Jr."/>
            <person name="Venter J.C."/>
            <person name="Fraser C.M."/>
        </authorList>
    </citation>
    <scope>NUCLEOTIDE SEQUENCE [LARGE SCALE GENOMIC DNA]</scope>
    <source>
        <strain>CDC 1551 / Oshkosh</strain>
    </source>
</reference>
<organism>
    <name type="scientific">Mycobacterium tuberculosis (strain CDC 1551 / Oshkosh)</name>
    <dbReference type="NCBI Taxonomy" id="83331"/>
    <lineage>
        <taxon>Bacteria</taxon>
        <taxon>Bacillati</taxon>
        <taxon>Actinomycetota</taxon>
        <taxon>Actinomycetes</taxon>
        <taxon>Mycobacteriales</taxon>
        <taxon>Mycobacteriaceae</taxon>
        <taxon>Mycobacterium</taxon>
        <taxon>Mycobacterium tuberculosis complex</taxon>
    </lineage>
</organism>
<sequence length="480" mass="50541">MAGVRHDDGSGLIAQRRPVRGEGATRSRGPSGPSNRNVSAADDPRRVALLAVHTSPLAQPGTGDAGGMNVYMLQSALHLARRGIEVEIFTRATASADPPVVRVAPGVLVRNVVAGPFEGLDKYDLPTQLCAFAAGVLRAEAVHEPGYYDIVHSHYWLSGQVGWLARDRWAVPLVHTAHTLAAVKNAALADGDGPEPPLRTVGEQQVVDEADRLIVNTDDEARQVISLHGADPARIDVVHPGVDLDVFRPGDRRAARAALGLPVDERVVAFVGRIQPLKAPDIVLRAAAKLPGVRIIVAGGPSGSGLASPDGLVRLADELGISARVTFLPPQSHTDLATLFRAADLVAVPSYSESFGLVAVEAQACGTPVVAAAVGGLPVAVRDGITGTLVSGHEVGQWADAIDHLLRLCAGPRGRVMSRAAARHAATFSWENTTDALLASYRRAIGEYNAERQRRGGEVISDLVAVGKPRHWTPRRGVGA</sequence>
<protein>
    <recommendedName>
        <fullName>D-inositol 3-phosphate glycosyltransferase</fullName>
        <ecNumber>2.4.1.250</ecNumber>
    </recommendedName>
    <alternativeName>
        <fullName>N-acetylglucosamine-inositol-phosphate N-acetylglucosaminyltransferase</fullName>
        <shortName>GlcNAc-Ins-P N-acetylglucosaminyltransferase</shortName>
    </alternativeName>
</protein>
<accession>P9WMY6</accession>
<accession>L0T3R4</accession>
<accession>P64707</accession>
<accession>Q11152</accession>
<proteinExistence type="inferred from homology"/>
<gene>
    <name type="primary">mshA</name>
    <name type="ordered locus">MT0504</name>
</gene>
<keyword id="KW-0328">Glycosyltransferase</keyword>
<keyword id="KW-0460">Magnesium</keyword>
<keyword id="KW-0479">Metal-binding</keyword>
<keyword id="KW-1185">Reference proteome</keyword>
<keyword id="KW-0808">Transferase</keyword>